<gene>
    <name evidence="1" type="primary">wecG</name>
    <name evidence="1" type="synonym">rffM</name>
    <name type="ordered locus">SEN3734</name>
</gene>
<accession>B5QVI6</accession>
<name>WECG_SALEP</name>
<comment type="function">
    <text evidence="1">Catalyzes the synthesis of Und-PP-GlcNAc-ManNAcA (Lipid II), the second lipid-linked intermediate involved in enterobacterial common antigen (ECA) synthesis.</text>
</comment>
<comment type="catalytic activity">
    <reaction evidence="1">
        <text>UDP-N-acetyl-alpha-D-mannosaminouronate + N-acetyl-alpha-D-glucosaminyl-di-trans,octa-cis-undecaprenyl diphosphate = beta-D-ManNAcA-(1-&gt;4)-alpha-D-GlcNAc-di-trans,octa-cis-undecaprenyl diphosphate + UDP + H(+)</text>
        <dbReference type="Rhea" id="RHEA:28366"/>
        <dbReference type="ChEBI" id="CHEBI:15378"/>
        <dbReference type="ChEBI" id="CHEBI:58223"/>
        <dbReference type="ChEBI" id="CHEBI:61495"/>
        <dbReference type="ChEBI" id="CHEBI:62959"/>
        <dbReference type="ChEBI" id="CHEBI:70731"/>
        <dbReference type="EC" id="2.4.1.180"/>
    </reaction>
</comment>
<comment type="pathway">
    <text evidence="1">Bacterial outer membrane biogenesis; enterobacterial common antigen biosynthesis.</text>
</comment>
<comment type="similarity">
    <text evidence="1">Belongs to the glycosyltransferase 26 family.</text>
</comment>
<sequence>MTNNAAAPLYSLRGLPLIGWRDMSHALNYLFADGQLKQGTLVAINAEKLLTAEDNPEVRALIAAAEFKYADGISVVRSIRKKFPQAQVSRVAGADLWEALMARAGKEGTPVFLVGGKPEVLAQTEAKLRTQWNVNIVGSQDGYFTPEQRQALFARIHASGAKIVTVAMGSPKQELLMRDCREVHPHALYMGVGGTYDVFTGHVKRAPKIWQNLGLEWLYRLLSQPRRITRQMRLLRYLRWHYTGDL</sequence>
<keyword id="KW-0328">Glycosyltransferase</keyword>
<keyword id="KW-0808">Transferase</keyword>
<protein>
    <recommendedName>
        <fullName evidence="1">UDP-N-acetyl-D-mannosaminuronic acid transferase</fullName>
        <shortName evidence="1">UDP-ManNAcA transferase</shortName>
        <ecNumber evidence="1">2.4.1.180</ecNumber>
    </recommendedName>
</protein>
<feature type="chain" id="PRO_1000134584" description="UDP-N-acetyl-D-mannosaminuronic acid transferase">
    <location>
        <begin position="1"/>
        <end position="246"/>
    </location>
</feature>
<dbReference type="EC" id="2.4.1.180" evidence="1"/>
<dbReference type="EMBL" id="AM933172">
    <property type="protein sequence ID" value="CAR35309.1"/>
    <property type="molecule type" value="Genomic_DNA"/>
</dbReference>
<dbReference type="RefSeq" id="WP_000183621.1">
    <property type="nucleotide sequence ID" value="NC_011294.1"/>
</dbReference>
<dbReference type="SMR" id="B5QVI6"/>
<dbReference type="CAZy" id="GT26">
    <property type="family name" value="Glycosyltransferase Family 26"/>
</dbReference>
<dbReference type="KEGG" id="set:SEN3734"/>
<dbReference type="HOGENOM" id="CLU_063203_3_2_6"/>
<dbReference type="UniPathway" id="UPA00566"/>
<dbReference type="Proteomes" id="UP000000613">
    <property type="component" value="Chromosome"/>
</dbReference>
<dbReference type="GO" id="GO:0047241">
    <property type="term" value="F:lipopolysaccharide N-acetylmannosaminouronosyltransferase activity"/>
    <property type="evidence" value="ECO:0007669"/>
    <property type="project" value="UniProtKB-UniRule"/>
</dbReference>
<dbReference type="GO" id="GO:0009246">
    <property type="term" value="P:enterobacterial common antigen biosynthetic process"/>
    <property type="evidence" value="ECO:0007669"/>
    <property type="project" value="UniProtKB-UniRule"/>
</dbReference>
<dbReference type="CDD" id="cd06533">
    <property type="entry name" value="Glyco_transf_WecG_TagA"/>
    <property type="match status" value="1"/>
</dbReference>
<dbReference type="HAMAP" id="MF_01001">
    <property type="entry name" value="WecG_RffM"/>
    <property type="match status" value="1"/>
</dbReference>
<dbReference type="InterPro" id="IPR023085">
    <property type="entry name" value="UDP-ManNAcA_Trfase_WecG"/>
</dbReference>
<dbReference type="InterPro" id="IPR004629">
    <property type="entry name" value="WecG_TagA_CpsF"/>
</dbReference>
<dbReference type="NCBIfam" id="NF002980">
    <property type="entry name" value="PRK03692.1"/>
    <property type="match status" value="1"/>
</dbReference>
<dbReference type="NCBIfam" id="TIGR00696">
    <property type="entry name" value="wecG_tagA_cpsF"/>
    <property type="match status" value="1"/>
</dbReference>
<dbReference type="PANTHER" id="PTHR34136">
    <property type="match status" value="1"/>
</dbReference>
<dbReference type="PANTHER" id="PTHR34136:SF1">
    <property type="entry name" value="UDP-N-ACETYL-D-MANNOSAMINURONIC ACID TRANSFERASE"/>
    <property type="match status" value="1"/>
</dbReference>
<dbReference type="Pfam" id="PF03808">
    <property type="entry name" value="Glyco_tran_WecG"/>
    <property type="match status" value="1"/>
</dbReference>
<organism>
    <name type="scientific">Salmonella enteritidis PT4 (strain P125109)</name>
    <dbReference type="NCBI Taxonomy" id="550537"/>
    <lineage>
        <taxon>Bacteria</taxon>
        <taxon>Pseudomonadati</taxon>
        <taxon>Pseudomonadota</taxon>
        <taxon>Gammaproteobacteria</taxon>
        <taxon>Enterobacterales</taxon>
        <taxon>Enterobacteriaceae</taxon>
        <taxon>Salmonella</taxon>
    </lineage>
</organism>
<proteinExistence type="inferred from homology"/>
<evidence type="ECO:0000255" key="1">
    <source>
        <dbReference type="HAMAP-Rule" id="MF_01001"/>
    </source>
</evidence>
<reference key="1">
    <citation type="journal article" date="2008" name="Genome Res.">
        <title>Comparative genome analysis of Salmonella enteritidis PT4 and Salmonella gallinarum 287/91 provides insights into evolutionary and host adaptation pathways.</title>
        <authorList>
            <person name="Thomson N.R."/>
            <person name="Clayton D.J."/>
            <person name="Windhorst D."/>
            <person name="Vernikos G."/>
            <person name="Davidson S."/>
            <person name="Churcher C."/>
            <person name="Quail M.A."/>
            <person name="Stevens M."/>
            <person name="Jones M.A."/>
            <person name="Watson M."/>
            <person name="Barron A."/>
            <person name="Layton A."/>
            <person name="Pickard D."/>
            <person name="Kingsley R.A."/>
            <person name="Bignell A."/>
            <person name="Clark L."/>
            <person name="Harris B."/>
            <person name="Ormond D."/>
            <person name="Abdellah Z."/>
            <person name="Brooks K."/>
            <person name="Cherevach I."/>
            <person name="Chillingworth T."/>
            <person name="Woodward J."/>
            <person name="Norberczak H."/>
            <person name="Lord A."/>
            <person name="Arrowsmith C."/>
            <person name="Jagels K."/>
            <person name="Moule S."/>
            <person name="Mungall K."/>
            <person name="Saunders M."/>
            <person name="Whitehead S."/>
            <person name="Chabalgoity J.A."/>
            <person name="Maskell D."/>
            <person name="Humphreys T."/>
            <person name="Roberts M."/>
            <person name="Barrow P.A."/>
            <person name="Dougan G."/>
            <person name="Parkhill J."/>
        </authorList>
    </citation>
    <scope>NUCLEOTIDE SEQUENCE [LARGE SCALE GENOMIC DNA]</scope>
    <source>
        <strain>P125109</strain>
    </source>
</reference>